<comment type="function">
    <text evidence="2">One of the essential components for the initiation of protein synthesis. Protects formylmethionyl-tRNA from spontaneous hydrolysis and promotes its binding to the 30S ribosomal subunits. Also involved in the hydrolysis of GTP during the formation of the 70S ribosomal complex.</text>
</comment>
<comment type="subcellular location">
    <subcellularLocation>
        <location evidence="2">Cytoplasm</location>
    </subcellularLocation>
</comment>
<comment type="similarity">
    <text evidence="2">Belongs to the TRAFAC class translation factor GTPase superfamily. Classic translation factor GTPase family. IF-2 subfamily.</text>
</comment>
<reference key="1">
    <citation type="journal article" date="2006" name="Proc. Natl. Acad. Sci. U.S.A.">
        <title>The complete genome sequence of a chronic atrophic gastritis Helicobacter pylori strain: evolution during disease progression.</title>
        <authorList>
            <person name="Oh J.D."/>
            <person name="Kling-Baeckhed H."/>
            <person name="Giannakis M."/>
            <person name="Xu J."/>
            <person name="Fulton R.S."/>
            <person name="Fulton L.A."/>
            <person name="Cordum H.S."/>
            <person name="Wang C."/>
            <person name="Elliott G."/>
            <person name="Edwards J."/>
            <person name="Mardis E.R."/>
            <person name="Engstrand L.G."/>
            <person name="Gordon J.I."/>
        </authorList>
    </citation>
    <scope>NUCLEOTIDE SEQUENCE [LARGE SCALE GENOMIC DNA]</scope>
    <source>
        <strain>HPAG1</strain>
    </source>
</reference>
<organism>
    <name type="scientific">Helicobacter pylori (strain HPAG1)</name>
    <dbReference type="NCBI Taxonomy" id="357544"/>
    <lineage>
        <taxon>Bacteria</taxon>
        <taxon>Pseudomonadati</taxon>
        <taxon>Campylobacterota</taxon>
        <taxon>Epsilonproteobacteria</taxon>
        <taxon>Campylobacterales</taxon>
        <taxon>Helicobacteraceae</taxon>
        <taxon>Helicobacter</taxon>
    </lineage>
</organism>
<proteinExistence type="inferred from homology"/>
<accession>Q1CUA6</accession>
<protein>
    <recommendedName>
        <fullName evidence="2">Translation initiation factor IF-2</fullName>
    </recommendedName>
</protein>
<evidence type="ECO:0000250" key="1"/>
<evidence type="ECO:0000255" key="2">
    <source>
        <dbReference type="HAMAP-Rule" id="MF_00100"/>
    </source>
</evidence>
<evidence type="ECO:0000256" key="3">
    <source>
        <dbReference type="SAM" id="MobiDB-lite"/>
    </source>
</evidence>
<sequence length="944" mass="105400">MSGMVDLKEFLAELGKTQKELKNVIEQAKDIGLELKTNSKMTPEQAGKLYKYIVDGIKEQIQANQPAKNPEQDNKDDLNMVQTPKPLNKKVSKTPKKEETKSQPKPKKTKEKKKEAPTPIAKKKGGIEIVNTFENQTPPTENTPKVVSHSQIEKAKQKLQEIQKSREALNKLTQSNANNASNTNNAKKEISEVKKQEQEIKRHENIKRRTGFRVIKRNDETENESENSVTESKKPTQSVAAIFEDIKKEWQEKDKQEAKKAKKPSKPKATPTAKNNKSHKIDFSDARDFKGNDIYDDETDEILLFDLHEQDNLNKEEEEKEIRQNINDRVRVQRKNPWMNESGIKRQSKKKRAFRNDNSQKVIQSTIAIPEEVRVYEFAQKANLNLADVIKTLFNLGLMVTKNDFLDKDSIEILAEEFHLEISVQNTLEEFEVEEVLEGVKKERPPVVTIMGHVDHGKTSLLDKIRDKRVAHTEAGGITQHIGAYMVEKNDKWVSFIDTPGHEAFSQMRNRGAQVTDIAVIVIAADDGVKQQTIEALEHAKAANVPVIFAMNKMDKPNVNPDKLKAECAELGYNPVDWGGEHEFIPVSAKTGDGIDNLLETILIQADIMELKAIEEGSARAVVLEGSVEKGRGAVATVIVQSGTLSVGDSFFAETAFGKVRTMTDDQGKSIQNLKPSMVALITGLSEVPPAGSVLIGVENDSIARLQAQKRATYLRQKALSKSTKVSFDELSEMVANKELKNIPVVIKADTQGSLEAIKNSLLELNNEEVAIQVIHSGVGGITENDLSLVSSSDHAVILGFNIRPTGNVKNKAKEYNVSIKTYTVIYALIEEMRSLLLGLMSPIIEEEHTGQAEVRETFNIPKVGTIAGCVVSDGVIARGIKARLIRDGVVVHTGEILSLKRFKDDVKEVSKGYECGIMLDNYNEIKVGDVFETYKEIHKKRTL</sequence>
<keyword id="KW-0963">Cytoplasm</keyword>
<keyword id="KW-0342">GTP-binding</keyword>
<keyword id="KW-0396">Initiation factor</keyword>
<keyword id="KW-0547">Nucleotide-binding</keyword>
<keyword id="KW-0648">Protein biosynthesis</keyword>
<gene>
    <name evidence="2" type="primary">infB</name>
    <name type="ordered locus">HPAG1_0399</name>
</gene>
<name>IF2_HELPH</name>
<feature type="chain" id="PRO_1000008253" description="Translation initiation factor IF-2">
    <location>
        <begin position="1"/>
        <end position="944"/>
    </location>
</feature>
<feature type="domain" description="tr-type G">
    <location>
        <begin position="443"/>
        <end position="612"/>
    </location>
</feature>
<feature type="region of interest" description="Disordered" evidence="3">
    <location>
        <begin position="61"/>
        <end position="281"/>
    </location>
</feature>
<feature type="region of interest" description="G1" evidence="1">
    <location>
        <begin position="452"/>
        <end position="459"/>
    </location>
</feature>
<feature type="region of interest" description="G2" evidence="1">
    <location>
        <begin position="477"/>
        <end position="481"/>
    </location>
</feature>
<feature type="region of interest" description="G3" evidence="1">
    <location>
        <begin position="498"/>
        <end position="501"/>
    </location>
</feature>
<feature type="region of interest" description="G4" evidence="1">
    <location>
        <begin position="552"/>
        <end position="555"/>
    </location>
</feature>
<feature type="region of interest" description="G5" evidence="1">
    <location>
        <begin position="588"/>
        <end position="590"/>
    </location>
</feature>
<feature type="compositionally biased region" description="Polar residues" evidence="3">
    <location>
        <begin position="132"/>
        <end position="150"/>
    </location>
</feature>
<feature type="compositionally biased region" description="Basic and acidic residues" evidence="3">
    <location>
        <begin position="151"/>
        <end position="169"/>
    </location>
</feature>
<feature type="compositionally biased region" description="Low complexity" evidence="3">
    <location>
        <begin position="175"/>
        <end position="185"/>
    </location>
</feature>
<feature type="compositionally biased region" description="Basic and acidic residues" evidence="3">
    <location>
        <begin position="186"/>
        <end position="203"/>
    </location>
</feature>
<feature type="compositionally biased region" description="Basic residues" evidence="3">
    <location>
        <begin position="204"/>
        <end position="215"/>
    </location>
</feature>
<feature type="compositionally biased region" description="Basic and acidic residues" evidence="3">
    <location>
        <begin position="244"/>
        <end position="259"/>
    </location>
</feature>
<feature type="binding site" evidence="2">
    <location>
        <begin position="452"/>
        <end position="459"/>
    </location>
    <ligand>
        <name>GTP</name>
        <dbReference type="ChEBI" id="CHEBI:37565"/>
    </ligand>
</feature>
<feature type="binding site" evidence="2">
    <location>
        <begin position="498"/>
        <end position="502"/>
    </location>
    <ligand>
        <name>GTP</name>
        <dbReference type="ChEBI" id="CHEBI:37565"/>
    </ligand>
</feature>
<feature type="binding site" evidence="2">
    <location>
        <begin position="552"/>
        <end position="555"/>
    </location>
    <ligand>
        <name>GTP</name>
        <dbReference type="ChEBI" id="CHEBI:37565"/>
    </ligand>
</feature>
<dbReference type="EMBL" id="CP000241">
    <property type="protein sequence ID" value="ABF84466.1"/>
    <property type="molecule type" value="Genomic_DNA"/>
</dbReference>
<dbReference type="RefSeq" id="WP_000016270.1">
    <property type="nucleotide sequence ID" value="NC_008086.1"/>
</dbReference>
<dbReference type="SMR" id="Q1CUA6"/>
<dbReference type="KEGG" id="hpa:HPAG1_0399"/>
<dbReference type="HOGENOM" id="CLU_006301_4_0_7"/>
<dbReference type="GO" id="GO:0005829">
    <property type="term" value="C:cytosol"/>
    <property type="evidence" value="ECO:0007669"/>
    <property type="project" value="TreeGrafter"/>
</dbReference>
<dbReference type="GO" id="GO:0005525">
    <property type="term" value="F:GTP binding"/>
    <property type="evidence" value="ECO:0007669"/>
    <property type="project" value="UniProtKB-KW"/>
</dbReference>
<dbReference type="GO" id="GO:0003924">
    <property type="term" value="F:GTPase activity"/>
    <property type="evidence" value="ECO:0007669"/>
    <property type="project" value="UniProtKB-UniRule"/>
</dbReference>
<dbReference type="GO" id="GO:0003743">
    <property type="term" value="F:translation initiation factor activity"/>
    <property type="evidence" value="ECO:0007669"/>
    <property type="project" value="UniProtKB-UniRule"/>
</dbReference>
<dbReference type="CDD" id="cd01887">
    <property type="entry name" value="IF2_eIF5B"/>
    <property type="match status" value="1"/>
</dbReference>
<dbReference type="CDD" id="cd03702">
    <property type="entry name" value="IF2_mtIF2_II"/>
    <property type="match status" value="1"/>
</dbReference>
<dbReference type="CDD" id="cd03692">
    <property type="entry name" value="mtIF2_IVc"/>
    <property type="match status" value="1"/>
</dbReference>
<dbReference type="FunFam" id="2.40.30.10:FF:000008">
    <property type="entry name" value="Translation initiation factor IF-2"/>
    <property type="match status" value="1"/>
</dbReference>
<dbReference type="FunFam" id="2.40.30.10:FF:000054">
    <property type="entry name" value="Translation initiation factor IF-2"/>
    <property type="match status" value="1"/>
</dbReference>
<dbReference type="FunFam" id="3.40.50.10050:FF:000001">
    <property type="entry name" value="Translation initiation factor IF-2"/>
    <property type="match status" value="1"/>
</dbReference>
<dbReference type="FunFam" id="3.40.50.300:FF:000019">
    <property type="entry name" value="Translation initiation factor IF-2"/>
    <property type="match status" value="1"/>
</dbReference>
<dbReference type="Gene3D" id="3.40.50.300">
    <property type="entry name" value="P-loop containing nucleotide triphosphate hydrolases"/>
    <property type="match status" value="1"/>
</dbReference>
<dbReference type="Gene3D" id="2.40.30.10">
    <property type="entry name" value="Translation factors"/>
    <property type="match status" value="2"/>
</dbReference>
<dbReference type="Gene3D" id="3.40.50.10050">
    <property type="entry name" value="Translation initiation factor IF- 2, domain 3"/>
    <property type="match status" value="1"/>
</dbReference>
<dbReference type="HAMAP" id="MF_00100_B">
    <property type="entry name" value="IF_2_B"/>
    <property type="match status" value="1"/>
</dbReference>
<dbReference type="InterPro" id="IPR053905">
    <property type="entry name" value="EF-G-like_DII"/>
</dbReference>
<dbReference type="InterPro" id="IPR044145">
    <property type="entry name" value="IF2_II"/>
</dbReference>
<dbReference type="InterPro" id="IPR006847">
    <property type="entry name" value="IF2_N"/>
</dbReference>
<dbReference type="InterPro" id="IPR027417">
    <property type="entry name" value="P-loop_NTPase"/>
</dbReference>
<dbReference type="InterPro" id="IPR005225">
    <property type="entry name" value="Small_GTP-bd"/>
</dbReference>
<dbReference type="InterPro" id="IPR000795">
    <property type="entry name" value="T_Tr_GTP-bd_dom"/>
</dbReference>
<dbReference type="InterPro" id="IPR000178">
    <property type="entry name" value="TF_IF2_bacterial-like"/>
</dbReference>
<dbReference type="InterPro" id="IPR015760">
    <property type="entry name" value="TIF_IF2"/>
</dbReference>
<dbReference type="InterPro" id="IPR023115">
    <property type="entry name" value="TIF_IF2_dom3"/>
</dbReference>
<dbReference type="InterPro" id="IPR036925">
    <property type="entry name" value="TIF_IF2_dom3_sf"/>
</dbReference>
<dbReference type="InterPro" id="IPR009000">
    <property type="entry name" value="Transl_B-barrel_sf"/>
</dbReference>
<dbReference type="NCBIfam" id="TIGR00487">
    <property type="entry name" value="IF-2"/>
    <property type="match status" value="1"/>
</dbReference>
<dbReference type="NCBIfam" id="TIGR00231">
    <property type="entry name" value="small_GTP"/>
    <property type="match status" value="1"/>
</dbReference>
<dbReference type="PANTHER" id="PTHR43381:SF5">
    <property type="entry name" value="TR-TYPE G DOMAIN-CONTAINING PROTEIN"/>
    <property type="match status" value="1"/>
</dbReference>
<dbReference type="PANTHER" id="PTHR43381">
    <property type="entry name" value="TRANSLATION INITIATION FACTOR IF-2-RELATED"/>
    <property type="match status" value="1"/>
</dbReference>
<dbReference type="Pfam" id="PF22042">
    <property type="entry name" value="EF-G_D2"/>
    <property type="match status" value="1"/>
</dbReference>
<dbReference type="Pfam" id="PF00009">
    <property type="entry name" value="GTP_EFTU"/>
    <property type="match status" value="1"/>
</dbReference>
<dbReference type="Pfam" id="PF11987">
    <property type="entry name" value="IF-2"/>
    <property type="match status" value="1"/>
</dbReference>
<dbReference type="Pfam" id="PF04760">
    <property type="entry name" value="IF2_N"/>
    <property type="match status" value="1"/>
</dbReference>
<dbReference type="SUPFAM" id="SSF52156">
    <property type="entry name" value="Initiation factor IF2/eIF5b, domain 3"/>
    <property type="match status" value="1"/>
</dbReference>
<dbReference type="SUPFAM" id="SSF52540">
    <property type="entry name" value="P-loop containing nucleoside triphosphate hydrolases"/>
    <property type="match status" value="1"/>
</dbReference>
<dbReference type="SUPFAM" id="SSF50447">
    <property type="entry name" value="Translation proteins"/>
    <property type="match status" value="2"/>
</dbReference>
<dbReference type="PROSITE" id="PS51722">
    <property type="entry name" value="G_TR_2"/>
    <property type="match status" value="1"/>
</dbReference>
<dbReference type="PROSITE" id="PS01176">
    <property type="entry name" value="IF2"/>
    <property type="match status" value="1"/>
</dbReference>